<keyword id="KW-0007">Acetylation</keyword>
<keyword id="KW-0143">Chaperone</keyword>
<keyword id="KW-0496">Mitochondrion</keyword>
<keyword id="KW-1185">Reference proteome</keyword>
<keyword id="KW-0809">Transit peptide</keyword>
<protein>
    <recommendedName>
        <fullName>GrpE protein homolog 2, mitochondrial</fullName>
    </recommendedName>
    <alternativeName>
        <fullName>Mt-GrpE#2</fullName>
    </alternativeName>
</protein>
<dbReference type="EMBL" id="CR861425">
    <property type="protein sequence ID" value="CAH93481.1"/>
    <property type="molecule type" value="mRNA"/>
</dbReference>
<dbReference type="RefSeq" id="NP_001127040.1">
    <property type="nucleotide sequence ID" value="NM_001133568.1"/>
</dbReference>
<dbReference type="SMR" id="Q5R435"/>
<dbReference type="FunCoup" id="Q5R435">
    <property type="interactions" value="760"/>
</dbReference>
<dbReference type="STRING" id="9601.ENSPPYP00000017827"/>
<dbReference type="GeneID" id="100174067"/>
<dbReference type="KEGG" id="pon:100174067"/>
<dbReference type="CTD" id="134266"/>
<dbReference type="eggNOG" id="KOG3003">
    <property type="taxonomic scope" value="Eukaryota"/>
</dbReference>
<dbReference type="InParanoid" id="Q5R435"/>
<dbReference type="OrthoDB" id="201635at2759"/>
<dbReference type="Proteomes" id="UP000001595">
    <property type="component" value="Unplaced"/>
</dbReference>
<dbReference type="GO" id="GO:0001405">
    <property type="term" value="C:PAM complex, Tim23 associated import motor"/>
    <property type="evidence" value="ECO:0007669"/>
    <property type="project" value="TreeGrafter"/>
</dbReference>
<dbReference type="GO" id="GO:0000774">
    <property type="term" value="F:adenyl-nucleotide exchange factor activity"/>
    <property type="evidence" value="ECO:0007669"/>
    <property type="project" value="InterPro"/>
</dbReference>
<dbReference type="GO" id="GO:0042803">
    <property type="term" value="F:protein homodimerization activity"/>
    <property type="evidence" value="ECO:0007669"/>
    <property type="project" value="InterPro"/>
</dbReference>
<dbReference type="GO" id="GO:0051087">
    <property type="term" value="F:protein-folding chaperone binding"/>
    <property type="evidence" value="ECO:0007669"/>
    <property type="project" value="InterPro"/>
</dbReference>
<dbReference type="GO" id="GO:0051082">
    <property type="term" value="F:unfolded protein binding"/>
    <property type="evidence" value="ECO:0007669"/>
    <property type="project" value="TreeGrafter"/>
</dbReference>
<dbReference type="GO" id="GO:0006457">
    <property type="term" value="P:protein folding"/>
    <property type="evidence" value="ECO:0007669"/>
    <property type="project" value="InterPro"/>
</dbReference>
<dbReference type="GO" id="GO:0030150">
    <property type="term" value="P:protein import into mitochondrial matrix"/>
    <property type="evidence" value="ECO:0007669"/>
    <property type="project" value="TreeGrafter"/>
</dbReference>
<dbReference type="CDD" id="cd00446">
    <property type="entry name" value="GrpE"/>
    <property type="match status" value="1"/>
</dbReference>
<dbReference type="FunFam" id="2.30.22.10:FF:000003">
    <property type="entry name" value="GrpE protein homolog"/>
    <property type="match status" value="1"/>
</dbReference>
<dbReference type="FunFam" id="3.90.20.20:FF:000004">
    <property type="entry name" value="GrpE protein homolog"/>
    <property type="match status" value="1"/>
</dbReference>
<dbReference type="Gene3D" id="3.90.20.20">
    <property type="match status" value="1"/>
</dbReference>
<dbReference type="Gene3D" id="2.30.22.10">
    <property type="entry name" value="Head domain of nucleotide exchange factor GrpE"/>
    <property type="match status" value="1"/>
</dbReference>
<dbReference type="HAMAP" id="MF_01151">
    <property type="entry name" value="GrpE"/>
    <property type="match status" value="1"/>
</dbReference>
<dbReference type="InterPro" id="IPR000740">
    <property type="entry name" value="GrpE"/>
</dbReference>
<dbReference type="InterPro" id="IPR013805">
    <property type="entry name" value="GrpE_coiled_coil"/>
</dbReference>
<dbReference type="InterPro" id="IPR009012">
    <property type="entry name" value="GrpE_head"/>
</dbReference>
<dbReference type="PANTHER" id="PTHR21237">
    <property type="entry name" value="GRPE PROTEIN"/>
    <property type="match status" value="1"/>
</dbReference>
<dbReference type="PANTHER" id="PTHR21237:SF10">
    <property type="entry name" value="GRPE PROTEIN HOMOLOG 2, MITOCHONDRIAL"/>
    <property type="match status" value="1"/>
</dbReference>
<dbReference type="Pfam" id="PF01025">
    <property type="entry name" value="GrpE"/>
    <property type="match status" value="1"/>
</dbReference>
<dbReference type="PRINTS" id="PR00773">
    <property type="entry name" value="GRPEPROTEIN"/>
</dbReference>
<dbReference type="SUPFAM" id="SSF58014">
    <property type="entry name" value="Coiled-coil domain of nucleotide exchange factor GrpE"/>
    <property type="match status" value="1"/>
</dbReference>
<dbReference type="SUPFAM" id="SSF51064">
    <property type="entry name" value="Head domain of nucleotide exchange factor GrpE"/>
    <property type="match status" value="1"/>
</dbReference>
<dbReference type="PROSITE" id="PS01071">
    <property type="entry name" value="GRPE"/>
    <property type="match status" value="1"/>
</dbReference>
<organism>
    <name type="scientific">Pongo abelii</name>
    <name type="common">Sumatran orangutan</name>
    <name type="synonym">Pongo pygmaeus abelii</name>
    <dbReference type="NCBI Taxonomy" id="9601"/>
    <lineage>
        <taxon>Eukaryota</taxon>
        <taxon>Metazoa</taxon>
        <taxon>Chordata</taxon>
        <taxon>Craniata</taxon>
        <taxon>Vertebrata</taxon>
        <taxon>Euteleostomi</taxon>
        <taxon>Mammalia</taxon>
        <taxon>Eutheria</taxon>
        <taxon>Euarchontoglires</taxon>
        <taxon>Primates</taxon>
        <taxon>Haplorrhini</taxon>
        <taxon>Catarrhini</taxon>
        <taxon>Hominidae</taxon>
        <taxon>Pongo</taxon>
    </lineage>
</organism>
<reference key="1">
    <citation type="submission" date="2004-11" db="EMBL/GenBank/DDBJ databases">
        <authorList>
            <consortium name="The German cDNA consortium"/>
        </authorList>
    </citation>
    <scope>NUCLEOTIDE SEQUENCE [LARGE SCALE MRNA]</scope>
    <source>
        <tissue>Brain cortex</tissue>
    </source>
</reference>
<name>GRPE2_PONAB</name>
<proteinExistence type="evidence at transcript level"/>
<accession>Q5R435</accession>
<gene>
    <name type="primary">GRPEL2</name>
</gene>
<feature type="transit peptide" description="Mitochondrion" evidence="1">
    <location>
        <begin position="1"/>
        <end position="32"/>
    </location>
</feature>
<feature type="chain" id="PRO_0000043073" description="GrpE protein homolog 2, mitochondrial">
    <location>
        <begin position="33"/>
        <end position="225"/>
    </location>
</feature>
<feature type="modified residue" description="N6-acetyllysine" evidence="2">
    <location>
        <position position="142"/>
    </location>
</feature>
<sequence length="225" mass="25463">MAVRSLWACRLRVQRLLAWSAAWESKGWPLPFSTATQRTAGEDCRSEDPPDELGPPLAERALRVKAVKLEKEVQDLTVRYQRAVADCENIRRRTQRCVEDAKIFGIQSFCKDLVEVADILEKTTECISEESEPEDQKLTLEKVFRGLLLLEAKLKSVFAKHGLEKLTPIGDKYDPHEHELICHVPAGVGVQPGTVALVRQDGYKLHGRTIRLARVEVAVESQRRL</sequence>
<evidence type="ECO:0000250" key="1"/>
<evidence type="ECO:0000250" key="2">
    <source>
        <dbReference type="UniProtKB" id="Q8TAA5"/>
    </source>
</evidence>
<evidence type="ECO:0000305" key="3"/>
<comment type="function">
    <text evidence="1">Essential component of the PAM complex, a complex required for the translocation of transit peptide-containing proteins from the inner membrane into the mitochondrial matrix in an ATP-dependent manner. Seems to control the nucleotide-dependent binding of mitochondrial HSP70 to substrate proteins. Stimulates ATPase activity of mt-HSP70. May also serve to modulate the interconversion of oligomeric (inactive) and monomeric (active) forms of mt-HSP70 (By similarity).</text>
</comment>
<comment type="subunit">
    <text evidence="1">Probable component of the PAM complex at least composed of a mitochondrial HSP70 protein, GRPEL1 or GRPEL2, TIMM44, TIMM16/PAM16 and TIMM14/DNAJC19.</text>
</comment>
<comment type="subcellular location">
    <subcellularLocation>
        <location evidence="1">Mitochondrion matrix</location>
    </subcellularLocation>
</comment>
<comment type="similarity">
    <text evidence="3">Belongs to the GrpE family.</text>
</comment>